<sequence>MAIKDWPEGEAPREKLLSQGVKQLSDAELLAVLLRVGLKGLSAVELARIMINEFGGLRSLLNASQAQVCRLDGIGPVKFAQMQAAVELGARISQENLKRGKILSDPDLTRDYLMRQLSDRAYEVFAILLLDSQHRVIQFVELFRGTINSASVYPREVVSLVLEKKAAAVIVCHNHPSGIAEPSTADRRITERLKQALQTIDVSLLDHMVVGDREIVSFAERGWID</sequence>
<proteinExistence type="inferred from homology"/>
<accession>A8H9B0</accession>
<protein>
    <recommendedName>
        <fullName>UPF0758 protein Spea_3837</fullName>
    </recommendedName>
</protein>
<reference key="1">
    <citation type="submission" date="2007-10" db="EMBL/GenBank/DDBJ databases">
        <title>Complete sequence of Shewanella pealeana ATCC 700345.</title>
        <authorList>
            <consortium name="US DOE Joint Genome Institute"/>
            <person name="Copeland A."/>
            <person name="Lucas S."/>
            <person name="Lapidus A."/>
            <person name="Barry K."/>
            <person name="Glavina del Rio T."/>
            <person name="Dalin E."/>
            <person name="Tice H."/>
            <person name="Pitluck S."/>
            <person name="Chertkov O."/>
            <person name="Brettin T."/>
            <person name="Bruce D."/>
            <person name="Detter J.C."/>
            <person name="Han C."/>
            <person name="Schmutz J."/>
            <person name="Larimer F."/>
            <person name="Land M."/>
            <person name="Hauser L."/>
            <person name="Kyrpides N."/>
            <person name="Kim E."/>
            <person name="Zhao J.-S.Z."/>
            <person name="Manno D."/>
            <person name="Hawari J."/>
            <person name="Richardson P."/>
        </authorList>
    </citation>
    <scope>NUCLEOTIDE SEQUENCE [LARGE SCALE GENOMIC DNA]</scope>
    <source>
        <strain>ATCC 700345 / ANG-SQ1</strain>
    </source>
</reference>
<evidence type="ECO:0000255" key="1">
    <source>
        <dbReference type="PROSITE-ProRule" id="PRU01182"/>
    </source>
</evidence>
<evidence type="ECO:0000305" key="2"/>
<name>Y3837_SHEPA</name>
<gene>
    <name type="ordered locus">Spea_3837</name>
</gene>
<organism>
    <name type="scientific">Shewanella pealeana (strain ATCC 700345 / ANG-SQ1)</name>
    <dbReference type="NCBI Taxonomy" id="398579"/>
    <lineage>
        <taxon>Bacteria</taxon>
        <taxon>Pseudomonadati</taxon>
        <taxon>Pseudomonadota</taxon>
        <taxon>Gammaproteobacteria</taxon>
        <taxon>Alteromonadales</taxon>
        <taxon>Shewanellaceae</taxon>
        <taxon>Shewanella</taxon>
    </lineage>
</organism>
<dbReference type="EMBL" id="CP000851">
    <property type="protein sequence ID" value="ABV89147.1"/>
    <property type="molecule type" value="Genomic_DNA"/>
</dbReference>
<dbReference type="RefSeq" id="WP_012157029.1">
    <property type="nucleotide sequence ID" value="NC_009901.1"/>
</dbReference>
<dbReference type="SMR" id="A8H9B0"/>
<dbReference type="STRING" id="398579.Spea_3837"/>
<dbReference type="KEGG" id="spl:Spea_3837"/>
<dbReference type="eggNOG" id="COG2003">
    <property type="taxonomic scope" value="Bacteria"/>
</dbReference>
<dbReference type="HOGENOM" id="CLU_073529_0_1_6"/>
<dbReference type="OrthoDB" id="9804482at2"/>
<dbReference type="Proteomes" id="UP000002608">
    <property type="component" value="Chromosome"/>
</dbReference>
<dbReference type="GO" id="GO:0046872">
    <property type="term" value="F:metal ion binding"/>
    <property type="evidence" value="ECO:0007669"/>
    <property type="project" value="UniProtKB-KW"/>
</dbReference>
<dbReference type="GO" id="GO:0008237">
    <property type="term" value="F:metallopeptidase activity"/>
    <property type="evidence" value="ECO:0007669"/>
    <property type="project" value="UniProtKB-KW"/>
</dbReference>
<dbReference type="GO" id="GO:0006508">
    <property type="term" value="P:proteolysis"/>
    <property type="evidence" value="ECO:0007669"/>
    <property type="project" value="UniProtKB-KW"/>
</dbReference>
<dbReference type="CDD" id="cd08071">
    <property type="entry name" value="MPN_DUF2466"/>
    <property type="match status" value="1"/>
</dbReference>
<dbReference type="FunFam" id="3.40.140.10:FF:000032">
    <property type="entry name" value="DNA repair protein RadC"/>
    <property type="match status" value="1"/>
</dbReference>
<dbReference type="Gene3D" id="3.40.140.10">
    <property type="entry name" value="Cytidine Deaminase, domain 2"/>
    <property type="match status" value="1"/>
</dbReference>
<dbReference type="InterPro" id="IPR037518">
    <property type="entry name" value="MPN"/>
</dbReference>
<dbReference type="InterPro" id="IPR025657">
    <property type="entry name" value="RadC_JAB"/>
</dbReference>
<dbReference type="InterPro" id="IPR010994">
    <property type="entry name" value="RuvA_2-like"/>
</dbReference>
<dbReference type="InterPro" id="IPR001405">
    <property type="entry name" value="UPF0758"/>
</dbReference>
<dbReference type="InterPro" id="IPR020891">
    <property type="entry name" value="UPF0758_CS"/>
</dbReference>
<dbReference type="InterPro" id="IPR046778">
    <property type="entry name" value="UPF0758_N"/>
</dbReference>
<dbReference type="NCBIfam" id="NF000642">
    <property type="entry name" value="PRK00024.1"/>
    <property type="match status" value="1"/>
</dbReference>
<dbReference type="NCBIfam" id="TIGR00608">
    <property type="entry name" value="radc"/>
    <property type="match status" value="1"/>
</dbReference>
<dbReference type="PANTHER" id="PTHR30471">
    <property type="entry name" value="DNA REPAIR PROTEIN RADC"/>
    <property type="match status" value="1"/>
</dbReference>
<dbReference type="PANTHER" id="PTHR30471:SF3">
    <property type="entry name" value="UPF0758 PROTEIN YEES-RELATED"/>
    <property type="match status" value="1"/>
</dbReference>
<dbReference type="Pfam" id="PF04002">
    <property type="entry name" value="RadC"/>
    <property type="match status" value="1"/>
</dbReference>
<dbReference type="Pfam" id="PF20582">
    <property type="entry name" value="UPF0758_N"/>
    <property type="match status" value="1"/>
</dbReference>
<dbReference type="SUPFAM" id="SSF102712">
    <property type="entry name" value="JAB1/MPN domain"/>
    <property type="match status" value="1"/>
</dbReference>
<dbReference type="SUPFAM" id="SSF47781">
    <property type="entry name" value="RuvA domain 2-like"/>
    <property type="match status" value="1"/>
</dbReference>
<dbReference type="PROSITE" id="PS50249">
    <property type="entry name" value="MPN"/>
    <property type="match status" value="1"/>
</dbReference>
<dbReference type="PROSITE" id="PS01302">
    <property type="entry name" value="UPF0758"/>
    <property type="match status" value="1"/>
</dbReference>
<comment type="similarity">
    <text evidence="2">Belongs to the UPF0758 family.</text>
</comment>
<feature type="chain" id="PRO_1000074153" description="UPF0758 protein Spea_3837">
    <location>
        <begin position="1"/>
        <end position="225"/>
    </location>
</feature>
<feature type="domain" description="MPN" evidence="1">
    <location>
        <begin position="102"/>
        <end position="224"/>
    </location>
</feature>
<feature type="short sequence motif" description="JAMM motif" evidence="1">
    <location>
        <begin position="173"/>
        <end position="186"/>
    </location>
</feature>
<feature type="binding site" evidence="1">
    <location>
        <position position="173"/>
    </location>
    <ligand>
        <name>Zn(2+)</name>
        <dbReference type="ChEBI" id="CHEBI:29105"/>
        <note>catalytic</note>
    </ligand>
</feature>
<feature type="binding site" evidence="1">
    <location>
        <position position="175"/>
    </location>
    <ligand>
        <name>Zn(2+)</name>
        <dbReference type="ChEBI" id="CHEBI:29105"/>
        <note>catalytic</note>
    </ligand>
</feature>
<feature type="binding site" evidence="1">
    <location>
        <position position="186"/>
    </location>
    <ligand>
        <name>Zn(2+)</name>
        <dbReference type="ChEBI" id="CHEBI:29105"/>
        <note>catalytic</note>
    </ligand>
</feature>
<keyword id="KW-0378">Hydrolase</keyword>
<keyword id="KW-0479">Metal-binding</keyword>
<keyword id="KW-0482">Metalloprotease</keyword>
<keyword id="KW-0645">Protease</keyword>
<keyword id="KW-1185">Reference proteome</keyword>
<keyword id="KW-0862">Zinc</keyword>